<protein>
    <recommendedName>
        <fullName evidence="1">Valine--tRNA ligase</fullName>
        <ecNumber evidence="1">6.1.1.9</ecNumber>
    </recommendedName>
    <alternativeName>
        <fullName evidence="1">Valyl-tRNA synthetase</fullName>
        <shortName evidence="1">ValRS</shortName>
    </alternativeName>
</protein>
<dbReference type="EC" id="6.1.1.9" evidence="1"/>
<dbReference type="EMBL" id="CP000766">
    <property type="protein sequence ID" value="ABY73011.1"/>
    <property type="molecule type" value="Genomic_DNA"/>
</dbReference>
<dbReference type="RefSeq" id="WP_012151193.1">
    <property type="nucleotide sequence ID" value="NC_010263.3"/>
</dbReference>
<dbReference type="SMR" id="B0BUV1"/>
<dbReference type="KEGG" id="rrj:RrIowa_1254"/>
<dbReference type="eggNOG" id="COG0525">
    <property type="taxonomic scope" value="Bacteria"/>
</dbReference>
<dbReference type="HOGENOM" id="CLU_001493_0_2_5"/>
<dbReference type="Proteomes" id="UP000000796">
    <property type="component" value="Chromosome"/>
</dbReference>
<dbReference type="GO" id="GO:0005829">
    <property type="term" value="C:cytosol"/>
    <property type="evidence" value="ECO:0007669"/>
    <property type="project" value="TreeGrafter"/>
</dbReference>
<dbReference type="GO" id="GO:0002161">
    <property type="term" value="F:aminoacyl-tRNA deacylase activity"/>
    <property type="evidence" value="ECO:0007669"/>
    <property type="project" value="InterPro"/>
</dbReference>
<dbReference type="GO" id="GO:0005524">
    <property type="term" value="F:ATP binding"/>
    <property type="evidence" value="ECO:0007669"/>
    <property type="project" value="UniProtKB-UniRule"/>
</dbReference>
<dbReference type="GO" id="GO:0004832">
    <property type="term" value="F:valine-tRNA ligase activity"/>
    <property type="evidence" value="ECO:0007669"/>
    <property type="project" value="UniProtKB-UniRule"/>
</dbReference>
<dbReference type="GO" id="GO:0006438">
    <property type="term" value="P:valyl-tRNA aminoacylation"/>
    <property type="evidence" value="ECO:0007669"/>
    <property type="project" value="UniProtKB-UniRule"/>
</dbReference>
<dbReference type="CDD" id="cd07962">
    <property type="entry name" value="Anticodon_Ia_Val"/>
    <property type="match status" value="1"/>
</dbReference>
<dbReference type="FunFam" id="1.10.730.10:FF:000033">
    <property type="entry name" value="Valine--tRNA ligase"/>
    <property type="match status" value="1"/>
</dbReference>
<dbReference type="FunFam" id="3.40.50.620:FF:000380">
    <property type="entry name" value="Valine--tRNA ligase"/>
    <property type="match status" value="1"/>
</dbReference>
<dbReference type="Gene3D" id="3.40.50.620">
    <property type="entry name" value="HUPs"/>
    <property type="match status" value="2"/>
</dbReference>
<dbReference type="Gene3D" id="1.10.730.10">
    <property type="entry name" value="Isoleucyl-tRNA Synthetase, Domain 1"/>
    <property type="match status" value="1"/>
</dbReference>
<dbReference type="HAMAP" id="MF_02005">
    <property type="entry name" value="Val_tRNA_synth_type2"/>
    <property type="match status" value="1"/>
</dbReference>
<dbReference type="InterPro" id="IPR001412">
    <property type="entry name" value="aa-tRNA-synth_I_CS"/>
</dbReference>
<dbReference type="InterPro" id="IPR002300">
    <property type="entry name" value="aa-tRNA-synth_Ia"/>
</dbReference>
<dbReference type="InterPro" id="IPR033705">
    <property type="entry name" value="Anticodon_Ia_Val"/>
</dbReference>
<dbReference type="InterPro" id="IPR013155">
    <property type="entry name" value="M/V/L/I-tRNA-synth_anticd-bd"/>
</dbReference>
<dbReference type="InterPro" id="IPR014729">
    <property type="entry name" value="Rossmann-like_a/b/a_fold"/>
</dbReference>
<dbReference type="InterPro" id="IPR009080">
    <property type="entry name" value="tRNAsynth_Ia_anticodon-bd"/>
</dbReference>
<dbReference type="InterPro" id="IPR009008">
    <property type="entry name" value="Val/Leu/Ile-tRNA-synth_edit"/>
</dbReference>
<dbReference type="InterPro" id="IPR022874">
    <property type="entry name" value="Valine-tRNA_ligase_type_2"/>
</dbReference>
<dbReference type="InterPro" id="IPR002303">
    <property type="entry name" value="Valyl-tRNA_ligase"/>
</dbReference>
<dbReference type="NCBIfam" id="NF009687">
    <property type="entry name" value="PRK13208.1"/>
    <property type="match status" value="1"/>
</dbReference>
<dbReference type="NCBIfam" id="TIGR00422">
    <property type="entry name" value="valS"/>
    <property type="match status" value="1"/>
</dbReference>
<dbReference type="PANTHER" id="PTHR11946:SF93">
    <property type="entry name" value="VALINE--TRNA LIGASE, CHLOROPLASTIC_MITOCHONDRIAL 2"/>
    <property type="match status" value="1"/>
</dbReference>
<dbReference type="PANTHER" id="PTHR11946">
    <property type="entry name" value="VALYL-TRNA SYNTHETASES"/>
    <property type="match status" value="1"/>
</dbReference>
<dbReference type="Pfam" id="PF08264">
    <property type="entry name" value="Anticodon_1"/>
    <property type="match status" value="1"/>
</dbReference>
<dbReference type="Pfam" id="PF00133">
    <property type="entry name" value="tRNA-synt_1"/>
    <property type="match status" value="1"/>
</dbReference>
<dbReference type="PRINTS" id="PR00986">
    <property type="entry name" value="TRNASYNTHVAL"/>
</dbReference>
<dbReference type="SUPFAM" id="SSF47323">
    <property type="entry name" value="Anticodon-binding domain of a subclass of class I aminoacyl-tRNA synthetases"/>
    <property type="match status" value="1"/>
</dbReference>
<dbReference type="SUPFAM" id="SSF52374">
    <property type="entry name" value="Nucleotidylyl transferase"/>
    <property type="match status" value="1"/>
</dbReference>
<dbReference type="SUPFAM" id="SSF50677">
    <property type="entry name" value="ValRS/IleRS/LeuRS editing domain"/>
    <property type="match status" value="1"/>
</dbReference>
<dbReference type="PROSITE" id="PS00178">
    <property type="entry name" value="AA_TRNA_LIGASE_I"/>
    <property type="match status" value="1"/>
</dbReference>
<evidence type="ECO:0000255" key="1">
    <source>
        <dbReference type="HAMAP-Rule" id="MF_02005"/>
    </source>
</evidence>
<keyword id="KW-0030">Aminoacyl-tRNA synthetase</keyword>
<keyword id="KW-0067">ATP-binding</keyword>
<keyword id="KW-0963">Cytoplasm</keyword>
<keyword id="KW-0436">Ligase</keyword>
<keyword id="KW-0547">Nucleotide-binding</keyword>
<keyword id="KW-0648">Protein biosynthesis</keyword>
<feature type="chain" id="PRO_1000088569" description="Valine--tRNA ligase">
    <location>
        <begin position="1"/>
        <end position="812"/>
    </location>
</feature>
<feature type="short sequence motif" description="'HIGH' region">
    <location>
        <begin position="46"/>
        <end position="56"/>
    </location>
</feature>
<feature type="short sequence motif" description="'KMSKS' region">
    <location>
        <begin position="536"/>
        <end position="540"/>
    </location>
</feature>
<feature type="binding site" evidence="1">
    <location>
        <position position="539"/>
    </location>
    <ligand>
        <name>ATP</name>
        <dbReference type="ChEBI" id="CHEBI:30616"/>
    </ligand>
</feature>
<reference key="1">
    <citation type="journal article" date="2008" name="Infect. Immun.">
        <title>Genomic comparison of virulent Rickettsia rickettsii Sheila Smith and avirulent Rickettsia rickettsii Iowa.</title>
        <authorList>
            <person name="Ellison D.W."/>
            <person name="Clark T.R."/>
            <person name="Sturdevant D.E."/>
            <person name="Virtaneva K."/>
            <person name="Porcella S.F."/>
            <person name="Hackstadt T."/>
        </authorList>
    </citation>
    <scope>NUCLEOTIDE SEQUENCE [LARGE SCALE GENOMIC DNA]</scope>
    <source>
        <strain>Iowa</strain>
    </source>
</reference>
<accession>B0BUV1</accession>
<comment type="function">
    <text evidence="1">Catalyzes the attachment of valine to tRNA(Val). As ValRS can inadvertently accommodate and process structurally similar amino acids such as threonine, to avoid such errors, it has a 'posttransfer' editing activity that hydrolyzes mischarged Thr-tRNA(Val) in a tRNA-dependent manner.</text>
</comment>
<comment type="catalytic activity">
    <reaction evidence="1">
        <text>tRNA(Val) + L-valine + ATP = L-valyl-tRNA(Val) + AMP + diphosphate</text>
        <dbReference type="Rhea" id="RHEA:10704"/>
        <dbReference type="Rhea" id="RHEA-COMP:9672"/>
        <dbReference type="Rhea" id="RHEA-COMP:9708"/>
        <dbReference type="ChEBI" id="CHEBI:30616"/>
        <dbReference type="ChEBI" id="CHEBI:33019"/>
        <dbReference type="ChEBI" id="CHEBI:57762"/>
        <dbReference type="ChEBI" id="CHEBI:78442"/>
        <dbReference type="ChEBI" id="CHEBI:78537"/>
        <dbReference type="ChEBI" id="CHEBI:456215"/>
        <dbReference type="EC" id="6.1.1.9"/>
    </reaction>
</comment>
<comment type="subunit">
    <text evidence="1">Monomer.</text>
</comment>
<comment type="subcellular location">
    <subcellularLocation>
        <location evidence="1">Cytoplasm</location>
    </subcellularLocation>
</comment>
<comment type="domain">
    <text evidence="1">ValRS has two distinct active sites: one for aminoacylation and one for editing. The misactivated threonine is translocated from the active site to the editing site.</text>
</comment>
<comment type="similarity">
    <text evidence="1">Belongs to the class-I aminoacyl-tRNA synthetase family. ValS type 2 subfamily.</text>
</comment>
<organism>
    <name type="scientific">Rickettsia rickettsii (strain Iowa)</name>
    <dbReference type="NCBI Taxonomy" id="452659"/>
    <lineage>
        <taxon>Bacteria</taxon>
        <taxon>Pseudomonadati</taxon>
        <taxon>Pseudomonadota</taxon>
        <taxon>Alphaproteobacteria</taxon>
        <taxon>Rickettsiales</taxon>
        <taxon>Rickettsiaceae</taxon>
        <taxon>Rickettsieae</taxon>
        <taxon>Rickettsia</taxon>
        <taxon>spotted fever group</taxon>
    </lineage>
</organism>
<name>SYV_RICRO</name>
<gene>
    <name evidence="1" type="primary">valS</name>
    <name type="ordered locus">RrIowa_1254</name>
</gene>
<sequence>MKEFPKNYNFTENEKKWQQIWQEKQIYAYNPNVAKEETYVIDTPPPTVSGQLHIGHVYSYTQTDFIVRFQRMMGKNIFYPMGFDDNGLPTERLVEKQKQIKAYNMERSEFIKICEEVVESEEEKFRSLFNQIALSVDWSLEYQTISPLSRKISQMSFLDLVQKEEIYRTNQPILWDPVDGTALAQADIEDKEQTSFMNYITFKTEQGDPLTIATTRPELLPACVAVFYHPDDGRYKHLAGKSAITPLFNEQVPLLADPLVRQDKGTGLVMCCTFGDQTDITWWKTHNLPLKTIITKKGTIDCQHETSIDGLKIKEARTKIIAILKEQELLIKQEDITHTVKCAERSGAPLEILTVPQWFVKTISHKEELLKRANELNWHPKNMKIRLENWINAISWDWCISRQRYFGVPFPVWYSKRVGEEGKILYADITQLPIDPLKDLPMGYSKEEVEPDYDVMDTWATSSVSPQLSTHGISDDFAVNKDRHDKLFPMDLRPQAHEIIRTWAFYTILKAHLHQNTLPWKNIMISGWCLAEDRSKMSKSKGNVLVPEKLLEQYGSDVIRYWSANSKLGADTAYSEDVMKNGKRLVNKLWSAAKFVFIHFDKLKGEDKKASLLDIKEKITNEFDKWMVNKLVELVKLATNELQNYEYANAMHLTEKFFWVVFCDNYLEISKTRSYDEEHKNPQGQYSSILTLYHVMQTLLKLFAPFMPHITEELYQILYSENSIHVKGSWVNYSDLNYEINAKGAEGLLEILDIVRKFKAEKNLSIKAPIKLLEVSGIVLSAELAEDLKNVTSADEIQFEMKDDKIKVNIIL</sequence>
<proteinExistence type="inferred from homology"/>